<gene>
    <name evidence="1" type="primary">psbI</name>
</gene>
<organism>
    <name type="scientific">Pelargonium hortorum</name>
    <name type="common">Common geranium</name>
    <name type="synonym">Pelargonium inquinans x Pelargonium zonale</name>
    <dbReference type="NCBI Taxonomy" id="4031"/>
    <lineage>
        <taxon>Eukaryota</taxon>
        <taxon>Viridiplantae</taxon>
        <taxon>Streptophyta</taxon>
        <taxon>Embryophyta</taxon>
        <taxon>Tracheophyta</taxon>
        <taxon>Spermatophyta</taxon>
        <taxon>Magnoliopsida</taxon>
        <taxon>eudicotyledons</taxon>
        <taxon>Gunneridae</taxon>
        <taxon>Pentapetalae</taxon>
        <taxon>rosids</taxon>
        <taxon>malvids</taxon>
        <taxon>Geraniales</taxon>
        <taxon>Geraniaceae</taxon>
        <taxon>Pelargonium</taxon>
    </lineage>
</organism>
<name>PSBI_PELHO</name>
<comment type="function">
    <text evidence="1">One of the components of the core complex of photosystem II (PSII), required for its stability and/or assembly. PSII is a light-driven water:plastoquinone oxidoreductase that uses light energy to abstract electrons from H(2)O, generating O(2) and a proton gradient subsequently used for ATP formation. It consists of a core antenna complex that captures photons, and an electron transfer chain that converts photonic excitation into a charge separation.</text>
</comment>
<comment type="subunit">
    <text evidence="1">PSII is composed of 1 copy each of membrane proteins PsbA, PsbB, PsbC, PsbD, PsbE, PsbF, PsbH, PsbI, PsbJ, PsbK, PsbL, PsbM, PsbT, PsbX, PsbY, PsbZ, Psb30/Ycf12, at least 3 peripheral proteins of the oxygen-evolving complex and a large number of cofactors. It forms dimeric complexes.</text>
</comment>
<comment type="subcellular location">
    <subcellularLocation>
        <location evidence="1">Plastid</location>
        <location evidence="1">Chloroplast thylakoid membrane</location>
        <topology evidence="1">Single-pass membrane protein</topology>
    </subcellularLocation>
</comment>
<comment type="similarity">
    <text evidence="1">Belongs to the PsbI family.</text>
</comment>
<feature type="chain" id="PRO_0000275803" description="Photosystem II reaction center protein I">
    <location>
        <begin position="1"/>
        <end position="36"/>
    </location>
</feature>
<feature type="transmembrane region" description="Helical" evidence="1">
    <location>
        <begin position="4"/>
        <end position="24"/>
    </location>
</feature>
<protein>
    <recommendedName>
        <fullName evidence="1">Photosystem II reaction center protein I</fullName>
        <shortName evidence="1">PSII-I</shortName>
    </recommendedName>
    <alternativeName>
        <fullName evidence="1">PSII 4.8 kDa protein</fullName>
    </alternativeName>
</protein>
<reference key="1">
    <citation type="journal article" date="2006" name="Mol. Biol. Evol.">
        <title>The complete chloroplast genome sequence of Pelargonium x hortorum: organization and evolution of the largest and most highly rearranged chloroplast genome of land plants.</title>
        <authorList>
            <person name="Chumley T.W."/>
            <person name="Palmer J.D."/>
            <person name="Mower J.P."/>
            <person name="Fourcade H.M."/>
            <person name="Calie P.J."/>
            <person name="Boore J.L."/>
            <person name="Jansen R.K."/>
        </authorList>
    </citation>
    <scope>NUCLEOTIDE SEQUENCE [LARGE SCALE GENOMIC DNA]</scope>
    <source>
        <strain>cv. Ringo White</strain>
    </source>
</reference>
<accession>Q06FX7</accession>
<sequence length="36" mass="4168">MLTLKLFVYTVVIFFVSLFIFGFLSNDPGRNPGREE</sequence>
<geneLocation type="chloroplast"/>
<keyword id="KW-0150">Chloroplast</keyword>
<keyword id="KW-0472">Membrane</keyword>
<keyword id="KW-0602">Photosynthesis</keyword>
<keyword id="KW-0604">Photosystem II</keyword>
<keyword id="KW-0934">Plastid</keyword>
<keyword id="KW-0674">Reaction center</keyword>
<keyword id="KW-0793">Thylakoid</keyword>
<keyword id="KW-0812">Transmembrane</keyword>
<keyword id="KW-1133">Transmembrane helix</keyword>
<proteinExistence type="inferred from homology"/>
<evidence type="ECO:0000255" key="1">
    <source>
        <dbReference type="HAMAP-Rule" id="MF_01316"/>
    </source>
</evidence>
<dbReference type="EMBL" id="DQ897681">
    <property type="protein sequence ID" value="ABI17245.1"/>
    <property type="molecule type" value="Genomic_DNA"/>
</dbReference>
<dbReference type="RefSeq" id="YP_784054.1">
    <property type="nucleotide sequence ID" value="NC_008454.1"/>
</dbReference>
<dbReference type="SMR" id="Q06FX7"/>
<dbReference type="GeneID" id="4362814"/>
<dbReference type="GO" id="GO:0009535">
    <property type="term" value="C:chloroplast thylakoid membrane"/>
    <property type="evidence" value="ECO:0007669"/>
    <property type="project" value="UniProtKB-SubCell"/>
</dbReference>
<dbReference type="GO" id="GO:0009539">
    <property type="term" value="C:photosystem II reaction center"/>
    <property type="evidence" value="ECO:0007669"/>
    <property type="project" value="InterPro"/>
</dbReference>
<dbReference type="GO" id="GO:0015979">
    <property type="term" value="P:photosynthesis"/>
    <property type="evidence" value="ECO:0007669"/>
    <property type="project" value="UniProtKB-UniRule"/>
</dbReference>
<dbReference type="HAMAP" id="MF_01316">
    <property type="entry name" value="PSII_PsbI"/>
    <property type="match status" value="1"/>
</dbReference>
<dbReference type="InterPro" id="IPR003686">
    <property type="entry name" value="PSII_PsbI"/>
</dbReference>
<dbReference type="InterPro" id="IPR037271">
    <property type="entry name" value="PSII_PsbI_sf"/>
</dbReference>
<dbReference type="NCBIfam" id="NF002735">
    <property type="entry name" value="PRK02655.1"/>
    <property type="match status" value="1"/>
</dbReference>
<dbReference type="PANTHER" id="PTHR35772">
    <property type="entry name" value="PHOTOSYSTEM II REACTION CENTER PROTEIN I"/>
    <property type="match status" value="1"/>
</dbReference>
<dbReference type="PANTHER" id="PTHR35772:SF1">
    <property type="entry name" value="PHOTOSYSTEM II REACTION CENTER PROTEIN I"/>
    <property type="match status" value="1"/>
</dbReference>
<dbReference type="Pfam" id="PF02532">
    <property type="entry name" value="PsbI"/>
    <property type="match status" value="1"/>
</dbReference>
<dbReference type="SUPFAM" id="SSF161041">
    <property type="entry name" value="Photosystem II reaction center protein I, PsbI"/>
    <property type="match status" value="1"/>
</dbReference>